<reference key="1">
    <citation type="submission" date="2003-08" db="EMBL/GenBank/DDBJ databases">
        <title>Characterization of the human Mob-1 like proteins.</title>
        <authorList>
            <person name="Florindo C.S."/>
            <person name="Tavares A.A."/>
        </authorList>
    </citation>
    <scope>NUCLEOTIDE SEQUENCE [MRNA] (ISOFORM 1)</scope>
</reference>
<reference key="2">
    <citation type="journal article" date="2004" name="Nat. Genet.">
        <title>Complete sequencing and characterization of 21,243 full-length human cDNAs.</title>
        <authorList>
            <person name="Ota T."/>
            <person name="Suzuki Y."/>
            <person name="Nishikawa T."/>
            <person name="Otsuki T."/>
            <person name="Sugiyama T."/>
            <person name="Irie R."/>
            <person name="Wakamatsu A."/>
            <person name="Hayashi K."/>
            <person name="Sato H."/>
            <person name="Nagai K."/>
            <person name="Kimura K."/>
            <person name="Makita H."/>
            <person name="Sekine M."/>
            <person name="Obayashi M."/>
            <person name="Nishi T."/>
            <person name="Shibahara T."/>
            <person name="Tanaka T."/>
            <person name="Ishii S."/>
            <person name="Yamamoto J."/>
            <person name="Saito K."/>
            <person name="Kawai Y."/>
            <person name="Isono Y."/>
            <person name="Nakamura Y."/>
            <person name="Nagahari K."/>
            <person name="Murakami K."/>
            <person name="Yasuda T."/>
            <person name="Iwayanagi T."/>
            <person name="Wagatsuma M."/>
            <person name="Shiratori A."/>
            <person name="Sudo H."/>
            <person name="Hosoiri T."/>
            <person name="Kaku Y."/>
            <person name="Kodaira H."/>
            <person name="Kondo H."/>
            <person name="Sugawara M."/>
            <person name="Takahashi M."/>
            <person name="Kanda K."/>
            <person name="Yokoi T."/>
            <person name="Furuya T."/>
            <person name="Kikkawa E."/>
            <person name="Omura Y."/>
            <person name="Abe K."/>
            <person name="Kamihara K."/>
            <person name="Katsuta N."/>
            <person name="Sato K."/>
            <person name="Tanikawa M."/>
            <person name="Yamazaki M."/>
            <person name="Ninomiya K."/>
            <person name="Ishibashi T."/>
            <person name="Yamashita H."/>
            <person name="Murakawa K."/>
            <person name="Fujimori K."/>
            <person name="Tanai H."/>
            <person name="Kimata M."/>
            <person name="Watanabe M."/>
            <person name="Hiraoka S."/>
            <person name="Chiba Y."/>
            <person name="Ishida S."/>
            <person name="Ono Y."/>
            <person name="Takiguchi S."/>
            <person name="Watanabe S."/>
            <person name="Yosida M."/>
            <person name="Hotuta T."/>
            <person name="Kusano J."/>
            <person name="Kanehori K."/>
            <person name="Takahashi-Fujii A."/>
            <person name="Hara H."/>
            <person name="Tanase T.-O."/>
            <person name="Nomura Y."/>
            <person name="Togiya S."/>
            <person name="Komai F."/>
            <person name="Hara R."/>
            <person name="Takeuchi K."/>
            <person name="Arita M."/>
            <person name="Imose N."/>
            <person name="Musashino K."/>
            <person name="Yuuki H."/>
            <person name="Oshima A."/>
            <person name="Sasaki N."/>
            <person name="Aotsuka S."/>
            <person name="Yoshikawa Y."/>
            <person name="Matsunawa H."/>
            <person name="Ichihara T."/>
            <person name="Shiohata N."/>
            <person name="Sano S."/>
            <person name="Moriya S."/>
            <person name="Momiyama H."/>
            <person name="Satoh N."/>
            <person name="Takami S."/>
            <person name="Terashima Y."/>
            <person name="Suzuki O."/>
            <person name="Nakagawa S."/>
            <person name="Senoh A."/>
            <person name="Mizoguchi H."/>
            <person name="Goto Y."/>
            <person name="Shimizu F."/>
            <person name="Wakebe H."/>
            <person name="Hishigaki H."/>
            <person name="Watanabe T."/>
            <person name="Sugiyama A."/>
            <person name="Takemoto M."/>
            <person name="Kawakami B."/>
            <person name="Yamazaki M."/>
            <person name="Watanabe K."/>
            <person name="Kumagai A."/>
            <person name="Itakura S."/>
            <person name="Fukuzumi Y."/>
            <person name="Fujimori Y."/>
            <person name="Komiyama M."/>
            <person name="Tashiro H."/>
            <person name="Tanigami A."/>
            <person name="Fujiwara T."/>
            <person name="Ono T."/>
            <person name="Yamada K."/>
            <person name="Fujii Y."/>
            <person name="Ozaki K."/>
            <person name="Hirao M."/>
            <person name="Ohmori Y."/>
            <person name="Kawabata A."/>
            <person name="Hikiji T."/>
            <person name="Kobatake N."/>
            <person name="Inagaki H."/>
            <person name="Ikema Y."/>
            <person name="Okamoto S."/>
            <person name="Okitani R."/>
            <person name="Kawakami T."/>
            <person name="Noguchi S."/>
            <person name="Itoh T."/>
            <person name="Shigeta K."/>
            <person name="Senba T."/>
            <person name="Matsumura K."/>
            <person name="Nakajima Y."/>
            <person name="Mizuno T."/>
            <person name="Morinaga M."/>
            <person name="Sasaki M."/>
            <person name="Togashi T."/>
            <person name="Oyama M."/>
            <person name="Hata H."/>
            <person name="Watanabe M."/>
            <person name="Komatsu T."/>
            <person name="Mizushima-Sugano J."/>
            <person name="Satoh T."/>
            <person name="Shirai Y."/>
            <person name="Takahashi Y."/>
            <person name="Nakagawa K."/>
            <person name="Okumura K."/>
            <person name="Nagase T."/>
            <person name="Nomura N."/>
            <person name="Kikuchi H."/>
            <person name="Masuho Y."/>
            <person name="Yamashita R."/>
            <person name="Nakai K."/>
            <person name="Yada T."/>
            <person name="Nakamura Y."/>
            <person name="Ohara O."/>
            <person name="Isogai T."/>
            <person name="Sugano S."/>
        </authorList>
    </citation>
    <scope>NUCLEOTIDE SEQUENCE [LARGE SCALE MRNA] (ISOFORMS 2 AND 3)</scope>
    <source>
        <tissue>Colon</tissue>
        <tissue>Testis</tissue>
    </source>
</reference>
<reference key="3">
    <citation type="journal article" date="2006" name="Nature">
        <title>Human chromosome 11 DNA sequence and analysis including novel gene identification.</title>
        <authorList>
            <person name="Taylor T.D."/>
            <person name="Noguchi H."/>
            <person name="Totoki Y."/>
            <person name="Toyoda A."/>
            <person name="Kuroki Y."/>
            <person name="Dewar K."/>
            <person name="Lloyd C."/>
            <person name="Itoh T."/>
            <person name="Takeda T."/>
            <person name="Kim D.-W."/>
            <person name="She X."/>
            <person name="Barlow K.F."/>
            <person name="Bloom T."/>
            <person name="Bruford E."/>
            <person name="Chang J.L."/>
            <person name="Cuomo C.A."/>
            <person name="Eichler E."/>
            <person name="FitzGerald M.G."/>
            <person name="Jaffe D.B."/>
            <person name="LaButti K."/>
            <person name="Nicol R."/>
            <person name="Park H.-S."/>
            <person name="Seaman C."/>
            <person name="Sougnez C."/>
            <person name="Yang X."/>
            <person name="Zimmer A.R."/>
            <person name="Zody M.C."/>
            <person name="Birren B.W."/>
            <person name="Nusbaum C."/>
            <person name="Fujiyama A."/>
            <person name="Hattori M."/>
            <person name="Rogers J."/>
            <person name="Lander E.S."/>
            <person name="Sakaki Y."/>
        </authorList>
    </citation>
    <scope>NUCLEOTIDE SEQUENCE [LARGE SCALE GENOMIC DNA]</scope>
</reference>
<reference key="4">
    <citation type="journal article" date="2004" name="Genome Res.">
        <title>The status, quality, and expansion of the NIH full-length cDNA project: the Mammalian Gene Collection (MGC).</title>
        <authorList>
            <consortium name="The MGC Project Team"/>
        </authorList>
    </citation>
    <scope>NUCLEOTIDE SEQUENCE [LARGE SCALE MRNA] (ISOFORM 1)</scope>
    <source>
        <tissue>Brain</tissue>
    </source>
</reference>
<reference key="5">
    <citation type="journal article" date="2004" name="J. Biol. Chem.">
        <title>Human Mob proteins regulate the NDR1 and NDR2 serine-threonine kinases.</title>
        <authorList>
            <person name="Devroe E."/>
            <person name="Erdjument-Bromage H."/>
            <person name="Tempst P."/>
            <person name="Silver P.A."/>
        </authorList>
    </citation>
    <scope>FUNCTION</scope>
    <scope>INTERACTION WITH STK3 AND STK38L</scope>
    <scope>IDENTIFICATION BY MASS SPECTROMETRY</scope>
    <scope>SUBCELLULAR LOCATION</scope>
</reference>
<reference key="6">
    <citation type="journal article" date="2011" name="BMC Syst. Biol.">
        <title>Initial characterization of the human central proteome.</title>
        <authorList>
            <person name="Burkard T.R."/>
            <person name="Planyavsky M."/>
            <person name="Kaupe I."/>
            <person name="Breitwieser F.P."/>
            <person name="Buerckstuemmer T."/>
            <person name="Bennett K.L."/>
            <person name="Superti-Furga G."/>
            <person name="Colinge J."/>
        </authorList>
    </citation>
    <scope>IDENTIFICATION BY MASS SPECTROMETRY [LARGE SCALE ANALYSIS]</scope>
</reference>
<proteinExistence type="evidence at protein level"/>
<gene>
    <name type="primary">MOB2</name>
    <name type="synonym">HCCA2</name>
</gene>
<name>MOB2_HUMAN</name>
<feature type="chain" id="PRO_0000193568" description="MOB kinase activator 2">
    <location>
        <begin position="1"/>
        <end position="237"/>
    </location>
</feature>
<feature type="region of interest" description="Disordered" evidence="2">
    <location>
        <begin position="1"/>
        <end position="21"/>
    </location>
</feature>
<feature type="region of interest" description="Disordered" evidence="2">
    <location>
        <begin position="217"/>
        <end position="237"/>
    </location>
</feature>
<feature type="compositionally biased region" description="Gly residues" evidence="2">
    <location>
        <begin position="217"/>
        <end position="229"/>
    </location>
</feature>
<feature type="binding site" evidence="1">
    <location>
        <position position="78"/>
    </location>
    <ligand>
        <name>Zn(2+)</name>
        <dbReference type="ChEBI" id="CHEBI:29105"/>
    </ligand>
</feature>
<feature type="binding site" evidence="1">
    <location>
        <position position="83"/>
    </location>
    <ligand>
        <name>Zn(2+)</name>
        <dbReference type="ChEBI" id="CHEBI:29105"/>
    </ligand>
</feature>
<feature type="binding site" evidence="1">
    <location>
        <position position="157"/>
    </location>
    <ligand>
        <name>Zn(2+)</name>
        <dbReference type="ChEBI" id="CHEBI:29105"/>
    </ligand>
</feature>
<feature type="binding site" evidence="1">
    <location>
        <position position="162"/>
    </location>
    <ligand>
        <name>Zn(2+)</name>
        <dbReference type="ChEBI" id="CHEBI:29105"/>
    </ligand>
</feature>
<feature type="splice variant" id="VSP_044472" description="In isoform 3." evidence="4">
    <original>MDWLMG</original>
    <variation>MLGDHCSLPEDQARPGQSLQSGLCCKMVLQAVSKVLR</variation>
    <location>
        <begin position="1"/>
        <end position="6"/>
    </location>
</feature>
<feature type="splice variant" id="VSP_012298" description="In isoform 2." evidence="4">
    <original>GREFPSSFES</original>
    <variation>ENSPAPLSPW</variation>
    <location>
        <begin position="133"/>
        <end position="142"/>
    </location>
</feature>
<feature type="splice variant" id="VSP_012299" description="In isoform 2." evidence="4">
    <location>
        <begin position="143"/>
        <end position="237"/>
    </location>
</feature>
<feature type="sequence conflict" description="In Ref. 2; BAB71443." evidence="5" ref="2">
    <original>E</original>
    <variation>K</variation>
    <location>
        <position position="49"/>
    </location>
</feature>
<feature type="sequence conflict" description="In Ref. 2; BAG59255." evidence="5" ref="2">
    <original>L</original>
    <variation>P</variation>
    <location sequence="Q70IA6-3">
        <position position="19"/>
    </location>
</feature>
<evidence type="ECO:0000250" key="1"/>
<evidence type="ECO:0000256" key="2">
    <source>
        <dbReference type="SAM" id="MobiDB-lite"/>
    </source>
</evidence>
<evidence type="ECO:0000269" key="3">
    <source>
    </source>
</evidence>
<evidence type="ECO:0000303" key="4">
    <source>
    </source>
</evidence>
<evidence type="ECO:0000305" key="5"/>
<keyword id="KW-0025">Alternative splicing</keyword>
<keyword id="KW-0963">Cytoplasm</keyword>
<keyword id="KW-0479">Metal-binding</keyword>
<keyword id="KW-0539">Nucleus</keyword>
<keyword id="KW-0597">Phosphoprotein</keyword>
<keyword id="KW-1267">Proteomics identification</keyword>
<keyword id="KW-1185">Reference proteome</keyword>
<keyword id="KW-0862">Zinc</keyword>
<protein>
    <recommendedName>
        <fullName>MOB kinase activator 2</fullName>
    </recommendedName>
    <alternativeName>
        <fullName>HCCA2</fullName>
    </alternativeName>
    <alternativeName>
        <fullName>Mob2 homolog</fullName>
    </alternativeName>
    <alternativeName>
        <fullName>Mps one binder kinase activator-like 2</fullName>
    </alternativeName>
</protein>
<sequence>MDWLMGKSKAKPNGKKPAAEERKAYLEPEHTKARITDFQFKELVVLPREIDLNEWLASNTTTFFHHINLQYSTISEFCTGETCQTMAVCNTQYYWYDERGKKVKCTAPQYVDFVMSSVQKLVTDEDVFPTKYGREFPSSFESLVRKICRHLFHVLAHIYWAHFKETLALELHGHLNTLYVHFILFAREFNLLDPKETAIMDDLTEVLCSGAGGVHSGGSGDGAGSGGPGAQNHVKER</sequence>
<comment type="function">
    <text evidence="3">Stimulates the autophosphorylation and kinase activity of STK38 and STK38L.</text>
</comment>
<comment type="subunit">
    <text>Binds STK38 and STK38L.</text>
</comment>
<comment type="interaction">
    <interactant intactId="EBI-2558739">
        <id>Q70IA6</id>
    </interactant>
    <interactant intactId="EBI-988094">
        <id>Q9NT62</id>
        <label>ATG3</label>
    </interactant>
    <organismsDiffer>false</organismsDiffer>
    <experiments>3</experiments>
</comment>
<comment type="interaction">
    <interactant intactId="EBI-2558739">
        <id>Q70IA6</id>
    </interactant>
    <interactant intactId="EBI-713148">
        <id>Q9GZT6</id>
        <label>CCDC90B</label>
    </interactant>
    <organismsDiffer>false</organismsDiffer>
    <experiments>3</experiments>
</comment>
<comment type="interaction">
    <interactant intactId="EBI-2558739">
        <id>Q70IA6</id>
    </interactant>
    <interactant intactId="EBI-12013806">
        <id>Q6NZ36-4</id>
        <label>FAAP20</label>
    </interactant>
    <organismsDiffer>false</organismsDiffer>
    <experiments>3</experiments>
</comment>
<comment type="interaction">
    <interactant intactId="EBI-2558739">
        <id>Q70IA6</id>
    </interactant>
    <interactant intactId="EBI-710176">
        <id>Q70Z53</id>
        <label>FRA10AC1</label>
    </interactant>
    <organismsDiffer>false</organismsDiffer>
    <experiments>3</experiments>
</comment>
<comment type="interaction">
    <interactant intactId="EBI-2558739">
        <id>Q70IA6</id>
    </interactant>
    <interactant intactId="EBI-2801965">
        <id>Q5JXC2</id>
        <label>MIIP</label>
    </interactant>
    <organismsDiffer>false</organismsDiffer>
    <experiments>3</experiments>
</comment>
<comment type="interaction">
    <interactant intactId="EBI-2558739">
        <id>Q70IA6</id>
    </interactant>
    <interactant intactId="EBI-741158">
        <id>Q96HA8</id>
        <label>NTAQ1</label>
    </interactant>
    <organismsDiffer>false</organismsDiffer>
    <experiments>3</experiments>
</comment>
<comment type="interaction">
    <interactant intactId="EBI-2558739">
        <id>Q70IA6</id>
    </interactant>
    <interactant intactId="EBI-23725364">
        <id>A6NKK0</id>
        <label>OR5H1</label>
    </interactant>
    <organismsDiffer>false</organismsDiffer>
    <experiments>3</experiments>
</comment>
<comment type="interaction">
    <interactant intactId="EBI-2558739">
        <id>Q70IA6</id>
    </interactant>
    <interactant intactId="EBI-10192441">
        <id>Q86VR2</id>
        <label>RETREG3</label>
    </interactant>
    <organismsDiffer>false</organismsDiffer>
    <experiments>3</experiments>
</comment>
<comment type="interaction">
    <interactant intactId="EBI-2558739">
        <id>Q70IA6</id>
    </interactant>
    <interactant intactId="EBI-4402330">
        <id>O95562</id>
        <label>SFT2D2</label>
    </interactant>
    <organismsDiffer>false</organismsDiffer>
    <experiments>3</experiments>
</comment>
<comment type="interaction">
    <interactant intactId="EBI-2558739">
        <id>Q70IA6</id>
    </interactant>
    <interactant intactId="EBI-458376">
        <id>Q15208</id>
        <label>STK38</label>
    </interactant>
    <organismsDiffer>false</organismsDiffer>
    <experiments>4</experiments>
</comment>
<comment type="interaction">
    <interactant intactId="EBI-2558739">
        <id>Q70IA6</id>
    </interactant>
    <interactant intactId="EBI-991501">
        <id>Q9Y2H1</id>
        <label>STK38L</label>
    </interactant>
    <organismsDiffer>false</organismsDiffer>
    <experiments>14</experiments>
</comment>
<comment type="subcellular location">
    <subcellularLocation>
        <location evidence="3">Nucleus</location>
    </subcellularLocation>
    <subcellularLocation>
        <location evidence="3">Cytoplasm</location>
        <location evidence="3">Perinuclear region</location>
    </subcellularLocation>
</comment>
<comment type="alternative products">
    <event type="alternative splicing"/>
    <isoform>
        <id>Q70IA6-1</id>
        <name>1</name>
        <sequence type="displayed"/>
    </isoform>
    <isoform>
        <id>Q70IA6-2</id>
        <name>2</name>
        <sequence type="described" ref="VSP_012298 VSP_012299"/>
    </isoform>
    <isoform>
        <id>Q70IA6-3</id>
        <name>3</name>
        <sequence type="described" ref="VSP_044472"/>
    </isoform>
</comment>
<comment type="PTM">
    <text>Phosphorylated.</text>
</comment>
<comment type="similarity">
    <text evidence="5">Belongs to the MOB1/phocein family.</text>
</comment>
<organism>
    <name type="scientific">Homo sapiens</name>
    <name type="common">Human</name>
    <dbReference type="NCBI Taxonomy" id="9606"/>
    <lineage>
        <taxon>Eukaryota</taxon>
        <taxon>Metazoa</taxon>
        <taxon>Chordata</taxon>
        <taxon>Craniata</taxon>
        <taxon>Vertebrata</taxon>
        <taxon>Euteleostomi</taxon>
        <taxon>Mammalia</taxon>
        <taxon>Eutheria</taxon>
        <taxon>Euarchontoglires</taxon>
        <taxon>Primates</taxon>
        <taxon>Haplorrhini</taxon>
        <taxon>Catarrhini</taxon>
        <taxon>Hominidae</taxon>
        <taxon>Homo</taxon>
    </lineage>
</organism>
<dbReference type="EMBL" id="AJ580639">
    <property type="protein sequence ID" value="CAE45271.1"/>
    <property type="molecule type" value="mRNA"/>
</dbReference>
<dbReference type="EMBL" id="AK057350">
    <property type="protein sequence ID" value="BAB71443.1"/>
    <property type="molecule type" value="mRNA"/>
</dbReference>
<dbReference type="EMBL" id="AK296658">
    <property type="protein sequence ID" value="BAG59255.1"/>
    <property type="molecule type" value="mRNA"/>
</dbReference>
<dbReference type="EMBL" id="AC091196">
    <property type="status" value="NOT_ANNOTATED_CDS"/>
    <property type="molecule type" value="Genomic_DNA"/>
</dbReference>
<dbReference type="EMBL" id="BC047291">
    <property type="protein sequence ID" value="AAH47291.1"/>
    <property type="molecule type" value="mRNA"/>
</dbReference>
<dbReference type="EMBL" id="BC067785">
    <property type="protein sequence ID" value="AAH67785.1"/>
    <property type="molecule type" value="mRNA"/>
</dbReference>
<dbReference type="CCDS" id="CCDS53591.1">
    <molecule id="Q70IA6-3"/>
</dbReference>
<dbReference type="RefSeq" id="NP_001165694.1">
    <molecule id="Q70IA6-3"/>
    <property type="nucleotide sequence ID" value="NM_001172223.3"/>
</dbReference>
<dbReference type="RefSeq" id="NP_443731.2">
    <molecule id="Q70IA6-1"/>
    <property type="nucleotide sequence ID" value="NM_053005.5"/>
</dbReference>
<dbReference type="RefSeq" id="XP_054189095.1">
    <molecule id="Q70IA6-2"/>
    <property type="nucleotide sequence ID" value="XM_054333120.1"/>
</dbReference>
<dbReference type="RefSeq" id="XP_054226034.1">
    <molecule id="Q70IA6-2"/>
    <property type="nucleotide sequence ID" value="XM_054370059.1"/>
</dbReference>
<dbReference type="SMR" id="Q70IA6"/>
<dbReference type="BioGRID" id="123506">
    <property type="interactions" value="119"/>
</dbReference>
<dbReference type="FunCoup" id="Q70IA6">
    <property type="interactions" value="905"/>
</dbReference>
<dbReference type="IntAct" id="Q70IA6">
    <property type="interactions" value="37"/>
</dbReference>
<dbReference type="MINT" id="Q70IA6"/>
<dbReference type="STRING" id="9606.ENSP00000328694"/>
<dbReference type="GlyGen" id="Q70IA6">
    <property type="glycosylation" value="1 site, 1 O-linked glycan (1 site)"/>
</dbReference>
<dbReference type="iPTMnet" id="Q70IA6"/>
<dbReference type="PhosphoSitePlus" id="Q70IA6"/>
<dbReference type="BioMuta" id="MOB2"/>
<dbReference type="DMDM" id="56749258"/>
<dbReference type="jPOST" id="Q70IA6"/>
<dbReference type="MassIVE" id="Q70IA6"/>
<dbReference type="PaxDb" id="9606-ENSP00000328694"/>
<dbReference type="PeptideAtlas" id="Q70IA6"/>
<dbReference type="ProteomicsDB" id="68555">
    <molecule id="Q70IA6-1"/>
</dbReference>
<dbReference type="ProteomicsDB" id="68556">
    <molecule id="Q70IA6-2"/>
</dbReference>
<dbReference type="Pumba" id="Q70IA6"/>
<dbReference type="Antibodypedia" id="22879">
    <property type="antibodies" value="152 antibodies from 27 providers"/>
</dbReference>
<dbReference type="DNASU" id="81532"/>
<dbReference type="Ensembl" id="ENST00000329957.7">
    <molecule id="Q70IA6-3"/>
    <property type="protein sequence ID" value="ENSP00000328694.6"/>
    <property type="gene ID" value="ENSG00000182208.15"/>
</dbReference>
<dbReference type="Ensembl" id="ENST00000707570.1">
    <molecule id="Q70IA6-3"/>
    <property type="protein sequence ID" value="ENSP00000516915.1"/>
    <property type="gene ID" value="ENSG00000291442.1"/>
</dbReference>
<dbReference type="Ensembl" id="ENST00000710276.1">
    <molecule id="Q70IA6-1"/>
    <property type="protein sequence ID" value="ENSP00000518169.1"/>
    <property type="gene ID" value="ENSG00000291442.1"/>
</dbReference>
<dbReference type="GeneID" id="81532"/>
<dbReference type="KEGG" id="hsa:81532"/>
<dbReference type="MANE-Select" id="ENST00000329957.7">
    <molecule id="Q70IA6-3"/>
    <property type="protein sequence ID" value="ENSP00000328694.6"/>
    <property type="RefSeq nucleotide sequence ID" value="NM_001172223.3"/>
    <property type="RefSeq protein sequence ID" value="NP_001165694.1"/>
</dbReference>
<dbReference type="UCSC" id="uc010qwz.3">
    <molecule id="Q70IA6-1"/>
    <property type="organism name" value="human"/>
</dbReference>
<dbReference type="AGR" id="HGNC:24904"/>
<dbReference type="CTD" id="81532"/>
<dbReference type="DisGeNET" id="81532"/>
<dbReference type="GeneCards" id="MOB2"/>
<dbReference type="HGNC" id="HGNC:24904">
    <property type="gene designation" value="MOB2"/>
</dbReference>
<dbReference type="HPA" id="ENSG00000182208">
    <property type="expression patterns" value="Low tissue specificity"/>
</dbReference>
<dbReference type="MIM" id="611969">
    <property type="type" value="gene"/>
</dbReference>
<dbReference type="neXtProt" id="NX_Q70IA6"/>
<dbReference type="OpenTargets" id="ENSG00000182208"/>
<dbReference type="VEuPathDB" id="HostDB:ENSG00000182208"/>
<dbReference type="eggNOG" id="KOG0440">
    <property type="taxonomic scope" value="Eukaryota"/>
</dbReference>
<dbReference type="GeneTree" id="ENSGT01120000271909"/>
<dbReference type="InParanoid" id="Q70IA6"/>
<dbReference type="OMA" id="CNHSSER"/>
<dbReference type="OrthoDB" id="8170117at2759"/>
<dbReference type="PAN-GO" id="Q70IA6">
    <property type="GO annotations" value="5 GO annotations based on evolutionary models"/>
</dbReference>
<dbReference type="PhylomeDB" id="Q70IA6"/>
<dbReference type="TreeFam" id="TF300789"/>
<dbReference type="PathwayCommons" id="Q70IA6"/>
<dbReference type="SignaLink" id="Q70IA6"/>
<dbReference type="BioGRID-ORCS" id="81532">
    <property type="hits" value="18 hits in 1165 CRISPR screens"/>
</dbReference>
<dbReference type="ChiTaRS" id="MOB2">
    <property type="organism name" value="human"/>
</dbReference>
<dbReference type="GenomeRNAi" id="81532"/>
<dbReference type="Pharos" id="Q70IA6">
    <property type="development level" value="Tbio"/>
</dbReference>
<dbReference type="PRO" id="PR:Q70IA6"/>
<dbReference type="Proteomes" id="UP000005640">
    <property type="component" value="Chromosome 11"/>
</dbReference>
<dbReference type="RNAct" id="Q70IA6">
    <property type="molecule type" value="protein"/>
</dbReference>
<dbReference type="Bgee" id="ENSG00000182208">
    <property type="expression patterns" value="Expressed in popliteal artery and 183 other cell types or tissues"/>
</dbReference>
<dbReference type="ExpressionAtlas" id="Q70IA6">
    <property type="expression patterns" value="baseline and differential"/>
</dbReference>
<dbReference type="GO" id="GO:0005737">
    <property type="term" value="C:cytoplasm"/>
    <property type="evidence" value="ECO:0000318"/>
    <property type="project" value="GO_Central"/>
</dbReference>
<dbReference type="GO" id="GO:0005829">
    <property type="term" value="C:cytosol"/>
    <property type="evidence" value="ECO:0000314"/>
    <property type="project" value="HPA"/>
</dbReference>
<dbReference type="GO" id="GO:0005730">
    <property type="term" value="C:nucleolus"/>
    <property type="evidence" value="ECO:0000314"/>
    <property type="project" value="HPA"/>
</dbReference>
<dbReference type="GO" id="GO:0005654">
    <property type="term" value="C:nucleoplasm"/>
    <property type="evidence" value="ECO:0000314"/>
    <property type="project" value="HPA"/>
</dbReference>
<dbReference type="GO" id="GO:0005634">
    <property type="term" value="C:nucleus"/>
    <property type="evidence" value="ECO:0000318"/>
    <property type="project" value="GO_Central"/>
</dbReference>
<dbReference type="GO" id="GO:0048471">
    <property type="term" value="C:perinuclear region of cytoplasm"/>
    <property type="evidence" value="ECO:0007669"/>
    <property type="project" value="UniProtKB-SubCell"/>
</dbReference>
<dbReference type="GO" id="GO:0046872">
    <property type="term" value="F:metal ion binding"/>
    <property type="evidence" value="ECO:0007669"/>
    <property type="project" value="UniProtKB-KW"/>
</dbReference>
<dbReference type="GO" id="GO:0030295">
    <property type="term" value="F:protein kinase activator activity"/>
    <property type="evidence" value="ECO:0000318"/>
    <property type="project" value="GO_Central"/>
</dbReference>
<dbReference type="GO" id="GO:0007165">
    <property type="term" value="P:signal transduction"/>
    <property type="evidence" value="ECO:0000318"/>
    <property type="project" value="GO_Central"/>
</dbReference>
<dbReference type="FunFam" id="1.20.140.30:FF:000003">
    <property type="entry name" value="MOB kinase activator 2"/>
    <property type="match status" value="1"/>
</dbReference>
<dbReference type="Gene3D" id="1.20.140.30">
    <property type="entry name" value="MOB kinase activator"/>
    <property type="match status" value="1"/>
</dbReference>
<dbReference type="InterPro" id="IPR005301">
    <property type="entry name" value="MOB_kinase_act_fam"/>
</dbReference>
<dbReference type="InterPro" id="IPR036703">
    <property type="entry name" value="MOB_kinase_act_sf"/>
</dbReference>
<dbReference type="PANTHER" id="PTHR22599">
    <property type="entry name" value="MPS ONE BINDER KINASE ACTIVATOR-LIKE MOB"/>
    <property type="match status" value="1"/>
</dbReference>
<dbReference type="Pfam" id="PF03637">
    <property type="entry name" value="Mob1_phocein"/>
    <property type="match status" value="1"/>
</dbReference>
<dbReference type="SMART" id="SM01388">
    <property type="entry name" value="Mob1_phocein"/>
    <property type="match status" value="1"/>
</dbReference>
<dbReference type="SUPFAM" id="SSF101152">
    <property type="entry name" value="Mob1/phocein"/>
    <property type="match status" value="1"/>
</dbReference>
<accession>Q70IA6</accession>
<accession>B4DKP3</accession>
<accession>Q96M67</accession>